<accession>A6S6H9</accession>
<accession>A0A384K2I2</accession>
<reference key="1">
    <citation type="journal article" date="2011" name="PLoS Genet.">
        <title>Genomic analysis of the necrotrophic fungal pathogens Sclerotinia sclerotiorum and Botrytis cinerea.</title>
        <authorList>
            <person name="Amselem J."/>
            <person name="Cuomo C.A."/>
            <person name="van Kan J.A.L."/>
            <person name="Viaud M."/>
            <person name="Benito E.P."/>
            <person name="Couloux A."/>
            <person name="Coutinho P.M."/>
            <person name="de Vries R.P."/>
            <person name="Dyer P.S."/>
            <person name="Fillinger S."/>
            <person name="Fournier E."/>
            <person name="Gout L."/>
            <person name="Hahn M."/>
            <person name="Kohn L."/>
            <person name="Lapalu N."/>
            <person name="Plummer K.M."/>
            <person name="Pradier J.-M."/>
            <person name="Quevillon E."/>
            <person name="Sharon A."/>
            <person name="Simon A."/>
            <person name="ten Have A."/>
            <person name="Tudzynski B."/>
            <person name="Tudzynski P."/>
            <person name="Wincker P."/>
            <person name="Andrew M."/>
            <person name="Anthouard V."/>
            <person name="Beever R.E."/>
            <person name="Beffa R."/>
            <person name="Benoit I."/>
            <person name="Bouzid O."/>
            <person name="Brault B."/>
            <person name="Chen Z."/>
            <person name="Choquer M."/>
            <person name="Collemare J."/>
            <person name="Cotton P."/>
            <person name="Danchin E.G."/>
            <person name="Da Silva C."/>
            <person name="Gautier A."/>
            <person name="Giraud C."/>
            <person name="Giraud T."/>
            <person name="Gonzalez C."/>
            <person name="Grossetete S."/>
            <person name="Gueldener U."/>
            <person name="Henrissat B."/>
            <person name="Howlett B.J."/>
            <person name="Kodira C."/>
            <person name="Kretschmer M."/>
            <person name="Lappartient A."/>
            <person name="Leroch M."/>
            <person name="Levis C."/>
            <person name="Mauceli E."/>
            <person name="Neuveglise C."/>
            <person name="Oeser B."/>
            <person name="Pearson M."/>
            <person name="Poulain J."/>
            <person name="Poussereau N."/>
            <person name="Quesneville H."/>
            <person name="Rascle C."/>
            <person name="Schumacher J."/>
            <person name="Segurens B."/>
            <person name="Sexton A."/>
            <person name="Silva E."/>
            <person name="Sirven C."/>
            <person name="Soanes D.M."/>
            <person name="Talbot N.J."/>
            <person name="Templeton M."/>
            <person name="Yandava C."/>
            <person name="Yarden O."/>
            <person name="Zeng Q."/>
            <person name="Rollins J.A."/>
            <person name="Lebrun M.-H."/>
            <person name="Dickman M."/>
        </authorList>
    </citation>
    <scope>NUCLEOTIDE SEQUENCE [LARGE SCALE GENOMIC DNA]</scope>
    <source>
        <strain>B05.10</strain>
    </source>
</reference>
<reference key="2">
    <citation type="journal article" date="2012" name="Eukaryot. Cell">
        <title>Genome update of Botrytis cinerea strains B05.10 and T4.</title>
        <authorList>
            <person name="Staats M."/>
            <person name="van Kan J.A.L."/>
        </authorList>
    </citation>
    <scope>NUCLEOTIDE SEQUENCE [LARGE SCALE GENOMIC DNA]</scope>
    <scope>GENOME REANNOTATION</scope>
    <source>
        <strain>B05.10</strain>
    </source>
</reference>
<reference key="3">
    <citation type="journal article" date="2017" name="Mol. Plant Pathol.">
        <title>A gapless genome sequence of the fungus Botrytis cinerea.</title>
        <authorList>
            <person name="van Kan J.A.L."/>
            <person name="Stassen J.H.M."/>
            <person name="Mosbach A."/>
            <person name="van der Lee T.A.J."/>
            <person name="Faino L."/>
            <person name="Farmer A.D."/>
            <person name="Papasotiriou D.G."/>
            <person name="Zhou S."/>
            <person name="Seidl M.F."/>
            <person name="Cottam E."/>
            <person name="Edel D."/>
            <person name="Hahn M."/>
            <person name="Schwartz D.C."/>
            <person name="Dietrich R.A."/>
            <person name="Widdison S."/>
            <person name="Scalliet G."/>
        </authorList>
    </citation>
    <scope>NUCLEOTIDE SEQUENCE [LARGE SCALE GENOMIC DNA]</scope>
    <scope>GENOME REANNOTATION</scope>
    <source>
        <strain>B05.10</strain>
    </source>
</reference>
<name>MZT1_BOTFB</name>
<proteinExistence type="inferred from homology"/>
<comment type="function">
    <text evidence="1">Required for gamma-tubulin complex recruitment to the microtubule organizing center (MTOC).</text>
</comment>
<comment type="subunit">
    <text evidence="1">Part of the gamma-tubulin complex.</text>
</comment>
<comment type="subcellular location">
    <subcellularLocation>
        <location evidence="1">Cytoplasm</location>
        <location evidence="1">Cytoskeleton</location>
        <location evidence="1">Microtubule organizing center</location>
        <location evidence="1">Spindle pole body</location>
    </subcellularLocation>
</comment>
<comment type="similarity">
    <text evidence="2">Belongs to the MOZART1 family.</text>
</comment>
<sequence>MADTSQKPDKATSAAQARQVIDVFHEISTLLNAELDRGTLSICISLIENGINPEALATVVRELKKDADEVRRQIAEGGVRNGE</sequence>
<protein>
    <recommendedName>
        <fullName>Mitotic-spindle organizing protein 1</fullName>
    </recommendedName>
    <alternativeName>
        <fullName>Mitotic-spindle organizing protein associated with a ring of gamma-tubulin 1</fullName>
    </alternativeName>
</protein>
<keyword id="KW-0963">Cytoplasm</keyword>
<keyword id="KW-0206">Cytoskeleton</keyword>
<keyword id="KW-1185">Reference proteome</keyword>
<dbReference type="EMBL" id="CP009818">
    <property type="protein sequence ID" value="ATZ57035.1"/>
    <property type="molecule type" value="Genomic_DNA"/>
</dbReference>
<dbReference type="RefSeq" id="XP_001553140.1">
    <property type="nucleotide sequence ID" value="XM_001553090.1"/>
</dbReference>
<dbReference type="SMR" id="A6S6H9"/>
<dbReference type="EnsemblFungi" id="Bcin14g02210.1">
    <property type="protein sequence ID" value="Bcin14p02210.1"/>
    <property type="gene ID" value="Bcin14g02210"/>
</dbReference>
<dbReference type="GeneID" id="5433656"/>
<dbReference type="KEGG" id="bfu:BCIN_14g02210"/>
<dbReference type="VEuPathDB" id="FungiDB:Bcin14g02210"/>
<dbReference type="OMA" id="LSICVGM"/>
<dbReference type="OrthoDB" id="48571at2759"/>
<dbReference type="Proteomes" id="UP000001798">
    <property type="component" value="Chromosome bcin14"/>
</dbReference>
<dbReference type="GO" id="GO:0005737">
    <property type="term" value="C:cytoplasm"/>
    <property type="evidence" value="ECO:0007669"/>
    <property type="project" value="UniProtKB-KW"/>
</dbReference>
<dbReference type="GO" id="GO:0000931">
    <property type="term" value="C:gamma-tubulin ring complex"/>
    <property type="evidence" value="ECO:0007669"/>
    <property type="project" value="InterPro"/>
</dbReference>
<dbReference type="GO" id="GO:0031021">
    <property type="term" value="C:interphase microtubule organizing center"/>
    <property type="evidence" value="ECO:0007669"/>
    <property type="project" value="TreeGrafter"/>
</dbReference>
<dbReference type="GO" id="GO:0044732">
    <property type="term" value="C:mitotic spindle pole body"/>
    <property type="evidence" value="ECO:0007669"/>
    <property type="project" value="TreeGrafter"/>
</dbReference>
<dbReference type="GO" id="GO:0005819">
    <property type="term" value="C:spindle"/>
    <property type="evidence" value="ECO:0007669"/>
    <property type="project" value="TreeGrafter"/>
</dbReference>
<dbReference type="GO" id="GO:0033566">
    <property type="term" value="P:gamma-tubulin complex localization"/>
    <property type="evidence" value="ECO:0007669"/>
    <property type="project" value="InterPro"/>
</dbReference>
<dbReference type="GO" id="GO:0051415">
    <property type="term" value="P:microtubule nucleation by interphase microtubule organizing center"/>
    <property type="evidence" value="ECO:0007669"/>
    <property type="project" value="TreeGrafter"/>
</dbReference>
<dbReference type="GO" id="GO:0090307">
    <property type="term" value="P:mitotic spindle assembly"/>
    <property type="evidence" value="ECO:0007669"/>
    <property type="project" value="TreeGrafter"/>
</dbReference>
<dbReference type="InterPro" id="IPR022214">
    <property type="entry name" value="MZT1"/>
</dbReference>
<dbReference type="PANTHER" id="PTHR28520">
    <property type="entry name" value="MITOTIC-SPINDLE ORGANIZING PROTEIN 1"/>
    <property type="match status" value="1"/>
</dbReference>
<dbReference type="PANTHER" id="PTHR28520:SF2">
    <property type="entry name" value="MITOTIC-SPINDLE ORGANIZING PROTEIN 1"/>
    <property type="match status" value="1"/>
</dbReference>
<dbReference type="Pfam" id="PF12554">
    <property type="entry name" value="MOZART1"/>
    <property type="match status" value="1"/>
</dbReference>
<feature type="chain" id="PRO_0000365080" description="Mitotic-spindle organizing protein 1">
    <location>
        <begin position="1"/>
        <end position="83"/>
    </location>
</feature>
<evidence type="ECO:0000250" key="1"/>
<evidence type="ECO:0000305" key="2"/>
<organism>
    <name type="scientific">Botryotinia fuckeliana (strain B05.10)</name>
    <name type="common">Noble rot fungus</name>
    <name type="synonym">Botrytis cinerea</name>
    <dbReference type="NCBI Taxonomy" id="332648"/>
    <lineage>
        <taxon>Eukaryota</taxon>
        <taxon>Fungi</taxon>
        <taxon>Dikarya</taxon>
        <taxon>Ascomycota</taxon>
        <taxon>Pezizomycotina</taxon>
        <taxon>Leotiomycetes</taxon>
        <taxon>Helotiales</taxon>
        <taxon>Sclerotiniaceae</taxon>
        <taxon>Botrytis</taxon>
    </lineage>
</organism>
<gene>
    <name type="ORF">BC1G_08507</name>
    <name type="ORF">BCIN_14g02210</name>
</gene>